<keyword id="KW-0963">Cytoplasm</keyword>
<keyword id="KW-0256">Endoplasmic reticulum</keyword>
<keyword id="KW-0472">Membrane</keyword>
<keyword id="KW-0496">Mitochondrion</keyword>
<keyword id="KW-1185">Reference proteome</keyword>
<keyword id="KW-0812">Transmembrane</keyword>
<keyword id="KW-1133">Transmembrane helix</keyword>
<name>CS012_BOVIN</name>
<dbReference type="EMBL" id="BC123667">
    <property type="protein sequence ID" value="AAI23668.1"/>
    <property type="molecule type" value="mRNA"/>
</dbReference>
<dbReference type="RefSeq" id="NP_001070360.1">
    <property type="nucleotide sequence ID" value="NM_001076892.1"/>
</dbReference>
<dbReference type="FunCoup" id="Q08DM5">
    <property type="interactions" value="228"/>
</dbReference>
<dbReference type="STRING" id="9913.ENSBTAP00000067866"/>
<dbReference type="PaxDb" id="9913-ENSBTAP00000027233"/>
<dbReference type="GeneID" id="533209"/>
<dbReference type="KEGG" id="bta:533209"/>
<dbReference type="CTD" id="533209"/>
<dbReference type="eggNOG" id="ENOG502RZQC">
    <property type="taxonomic scope" value="Eukaryota"/>
</dbReference>
<dbReference type="InParanoid" id="Q08DM5"/>
<dbReference type="OrthoDB" id="5976774at2759"/>
<dbReference type="Proteomes" id="UP000009136">
    <property type="component" value="Unplaced"/>
</dbReference>
<dbReference type="GO" id="GO:0005829">
    <property type="term" value="C:cytosol"/>
    <property type="evidence" value="ECO:0007669"/>
    <property type="project" value="UniProtKB-SubCell"/>
</dbReference>
<dbReference type="GO" id="GO:0005783">
    <property type="term" value="C:endoplasmic reticulum"/>
    <property type="evidence" value="ECO:0000250"/>
    <property type="project" value="UniProtKB"/>
</dbReference>
<dbReference type="GO" id="GO:0031966">
    <property type="term" value="C:mitochondrial membrane"/>
    <property type="evidence" value="ECO:0000250"/>
    <property type="project" value="UniProtKB"/>
</dbReference>
<dbReference type="GO" id="GO:0005739">
    <property type="term" value="C:mitochondrion"/>
    <property type="evidence" value="ECO:0000250"/>
    <property type="project" value="UniProtKB"/>
</dbReference>
<dbReference type="InterPro" id="IPR033369">
    <property type="entry name" value="C19orf12"/>
</dbReference>
<dbReference type="PANTHER" id="PTHR31493">
    <property type="entry name" value="NAZO FAMILY MEMBER"/>
    <property type="match status" value="1"/>
</dbReference>
<dbReference type="PANTHER" id="PTHR31493:SF1">
    <property type="entry name" value="PROTEIN C19ORF12"/>
    <property type="match status" value="1"/>
</dbReference>
<dbReference type="Pfam" id="PF20721">
    <property type="entry name" value="C19orf12"/>
    <property type="match status" value="1"/>
</dbReference>
<proteinExistence type="evidence at transcript level"/>
<accession>Q08DM5</accession>
<evidence type="ECO:0000250" key="1">
    <source>
        <dbReference type="UniProtKB" id="Q9NSK7"/>
    </source>
</evidence>
<evidence type="ECO:0000255" key="2"/>
<evidence type="ECO:0000305" key="3"/>
<protein>
    <recommendedName>
        <fullName>Protein C19orf12 homolog</fullName>
    </recommendedName>
</protein>
<feature type="chain" id="PRO_0000296661" description="Protein C19orf12 homolog">
    <location>
        <begin position="1"/>
        <end position="141"/>
    </location>
</feature>
<feature type="transmembrane region" description="Helical" evidence="2">
    <location>
        <begin position="37"/>
        <end position="57"/>
    </location>
</feature>
<sequence length="141" mass="15045">MPVAVEDIMRLLCSISEERKMKAAVKHSGRGALVTGAVAFVGGLVGGPPGLAVGGAVGGLLGAWMTSGQFKPVPQIIMELPPAEQQKLFNEATAIIRHLEWTDAVQLTMLVMGSEALQKQLLAMLANYVTKELRAEVQYDD</sequence>
<reference key="1">
    <citation type="submission" date="2006-09" db="EMBL/GenBank/DDBJ databases">
        <authorList>
            <consortium name="NIH - Mammalian Gene Collection (MGC) project"/>
        </authorList>
    </citation>
    <scope>NUCLEOTIDE SEQUENCE [LARGE SCALE MRNA]</scope>
    <source>
        <strain>Hereford</strain>
        <tissue>Brain cortex</tissue>
    </source>
</reference>
<comment type="subcellular location">
    <subcellularLocation>
        <location evidence="1">Mitochondrion</location>
    </subcellularLocation>
    <subcellularLocation>
        <location evidence="1">Mitochondrion membrane</location>
        <topology evidence="2">Single-pass membrane protein</topology>
    </subcellularLocation>
    <subcellularLocation>
        <location evidence="1">Endoplasmic reticulum</location>
    </subcellularLocation>
    <subcellularLocation>
        <location evidence="1">Cytoplasm</location>
        <location evidence="1">Cytosol</location>
    </subcellularLocation>
    <text evidence="1">In response to oxidative stress, relocates to the cytosol forming aggregates that partially co-localize with mitochondria.</text>
</comment>
<comment type="similarity">
    <text evidence="3">Belongs to the C19orf12 family.</text>
</comment>
<organism>
    <name type="scientific">Bos taurus</name>
    <name type="common">Bovine</name>
    <dbReference type="NCBI Taxonomy" id="9913"/>
    <lineage>
        <taxon>Eukaryota</taxon>
        <taxon>Metazoa</taxon>
        <taxon>Chordata</taxon>
        <taxon>Craniata</taxon>
        <taxon>Vertebrata</taxon>
        <taxon>Euteleostomi</taxon>
        <taxon>Mammalia</taxon>
        <taxon>Eutheria</taxon>
        <taxon>Laurasiatheria</taxon>
        <taxon>Artiodactyla</taxon>
        <taxon>Ruminantia</taxon>
        <taxon>Pecora</taxon>
        <taxon>Bovidae</taxon>
        <taxon>Bovinae</taxon>
        <taxon>Bos</taxon>
    </lineage>
</organism>